<reference key="1">
    <citation type="journal article" date="2000" name="J. Bacteriol.">
        <title>Analysis of the role of recA in phenotypic switching of Pseudomonas tolaasii.</title>
        <authorList>
            <person name="Sinha H."/>
            <person name="Pain A."/>
            <person name="Johnstone K."/>
        </authorList>
    </citation>
    <scope>NUCLEOTIDE SEQUENCE [GENOMIC DNA]</scope>
    <source>
        <strain>1116S</strain>
    </source>
</reference>
<comment type="function">
    <text evidence="1">Modulates RecA activity.</text>
</comment>
<comment type="subcellular location">
    <subcellularLocation>
        <location evidence="2">Cytoplasm</location>
    </subcellularLocation>
</comment>
<comment type="similarity">
    <text evidence="2">Belongs to the RecX family.</text>
</comment>
<accession>Q9RDT9</accession>
<sequence>MTVVLDTLVAVRRTAMDLLARREHGRVELTRKLRQRGAEPEMIETALDRLTEEGLLSEARYLESFVSYRPRSGYGPARIREELSQRGLQRADIDLALRECGISWQSQLEDTWRRKFSGHLPIDAKERAKQGRFLSYRGFSMDMISRLLSGRDLDD</sequence>
<proteinExistence type="inferred from homology"/>
<feature type="chain" id="PRO_0000162463" description="Regulatory protein RecX">
    <location>
        <begin position="1"/>
        <end position="155"/>
    </location>
</feature>
<name>RECX_PSETO</name>
<keyword id="KW-0963">Cytoplasm</keyword>
<gene>
    <name type="primary">recX</name>
</gene>
<dbReference type="EMBL" id="AJ249265">
    <property type="protein sequence ID" value="CAB65374.1"/>
    <property type="molecule type" value="Genomic_DNA"/>
</dbReference>
<dbReference type="SMR" id="Q9RDT9"/>
<dbReference type="GO" id="GO:0005737">
    <property type="term" value="C:cytoplasm"/>
    <property type="evidence" value="ECO:0007669"/>
    <property type="project" value="UniProtKB-SubCell"/>
</dbReference>
<dbReference type="GO" id="GO:0006282">
    <property type="term" value="P:regulation of DNA repair"/>
    <property type="evidence" value="ECO:0007669"/>
    <property type="project" value="UniProtKB-UniRule"/>
</dbReference>
<dbReference type="Gene3D" id="1.10.10.10">
    <property type="entry name" value="Winged helix-like DNA-binding domain superfamily/Winged helix DNA-binding domain"/>
    <property type="match status" value="3"/>
</dbReference>
<dbReference type="HAMAP" id="MF_01114">
    <property type="entry name" value="RecX"/>
    <property type="match status" value="1"/>
</dbReference>
<dbReference type="InterPro" id="IPR053926">
    <property type="entry name" value="RecX_HTH_1st"/>
</dbReference>
<dbReference type="InterPro" id="IPR053924">
    <property type="entry name" value="RecX_HTH_2nd"/>
</dbReference>
<dbReference type="InterPro" id="IPR053925">
    <property type="entry name" value="RecX_HTH_3rd"/>
</dbReference>
<dbReference type="InterPro" id="IPR003783">
    <property type="entry name" value="Regulatory_RecX"/>
</dbReference>
<dbReference type="InterPro" id="IPR036388">
    <property type="entry name" value="WH-like_DNA-bd_sf"/>
</dbReference>
<dbReference type="NCBIfam" id="NF001054">
    <property type="entry name" value="PRK00117.2-1"/>
    <property type="match status" value="1"/>
</dbReference>
<dbReference type="PANTHER" id="PTHR33602">
    <property type="entry name" value="REGULATORY PROTEIN RECX FAMILY PROTEIN"/>
    <property type="match status" value="1"/>
</dbReference>
<dbReference type="PANTHER" id="PTHR33602:SF1">
    <property type="entry name" value="REGULATORY PROTEIN RECX FAMILY PROTEIN"/>
    <property type="match status" value="1"/>
</dbReference>
<dbReference type="Pfam" id="PF21982">
    <property type="entry name" value="RecX_HTH1"/>
    <property type="match status" value="1"/>
</dbReference>
<dbReference type="Pfam" id="PF02631">
    <property type="entry name" value="RecX_HTH2"/>
    <property type="match status" value="1"/>
</dbReference>
<dbReference type="Pfam" id="PF21981">
    <property type="entry name" value="RecX_HTH3"/>
    <property type="match status" value="1"/>
</dbReference>
<evidence type="ECO:0000250" key="1"/>
<evidence type="ECO:0000305" key="2"/>
<organism>
    <name type="scientific">Pseudomonas tolaasii</name>
    <dbReference type="NCBI Taxonomy" id="29442"/>
    <lineage>
        <taxon>Bacteria</taxon>
        <taxon>Pseudomonadati</taxon>
        <taxon>Pseudomonadota</taxon>
        <taxon>Gammaproteobacteria</taxon>
        <taxon>Pseudomonadales</taxon>
        <taxon>Pseudomonadaceae</taxon>
        <taxon>Pseudomonas</taxon>
    </lineage>
</organism>
<protein>
    <recommendedName>
        <fullName>Regulatory protein RecX</fullName>
    </recommendedName>
</protein>